<evidence type="ECO:0000250" key="1"/>
<evidence type="ECO:0000250" key="2">
    <source>
        <dbReference type="UniProtKB" id="O15151"/>
    </source>
</evidence>
<evidence type="ECO:0000255" key="3"/>
<evidence type="ECO:0000255" key="4">
    <source>
        <dbReference type="PROSITE-ProRule" id="PRU00175"/>
    </source>
</evidence>
<evidence type="ECO:0000255" key="5">
    <source>
        <dbReference type="PROSITE-ProRule" id="PRU00322"/>
    </source>
</evidence>
<evidence type="ECO:0000255" key="6">
    <source>
        <dbReference type="PROSITE-ProRule" id="PRU01273"/>
    </source>
</evidence>
<evidence type="ECO:0000256" key="7">
    <source>
        <dbReference type="SAM" id="MobiDB-lite"/>
    </source>
</evidence>
<evidence type="ECO:0000305" key="8"/>
<organism>
    <name type="scientific">Bos taurus</name>
    <name type="common">Bovine</name>
    <dbReference type="NCBI Taxonomy" id="9913"/>
    <lineage>
        <taxon>Eukaryota</taxon>
        <taxon>Metazoa</taxon>
        <taxon>Chordata</taxon>
        <taxon>Craniata</taxon>
        <taxon>Vertebrata</taxon>
        <taxon>Euteleostomi</taxon>
        <taxon>Mammalia</taxon>
        <taxon>Eutheria</taxon>
        <taxon>Laurasiatheria</taxon>
        <taxon>Artiodactyla</taxon>
        <taxon>Ruminantia</taxon>
        <taxon>Pecora</taxon>
        <taxon>Bovidae</taxon>
        <taxon>Bovinae</taxon>
        <taxon>Bos</taxon>
    </lineage>
</organism>
<sequence>MTSFSTSAPCSAPDSARRISPEQTNQVRPKLPLLKILQAAGAQGEMFTVKEVMHYLGQYIMVKQLYDQQEQHMVYCGGDLLGELLGRQSFSVKDPSPLYDMLRKNLVTLATAATDAAQTLAIAQEHSMDIPSQDHLKQSVEESSNSRKRTEEGNIPTLPTSQYKCKNSREDEDLVANLTQEETSRLDLGFEEWDVAGLPWWFLGNLRNNYTPRSNGSTDLQTNQDIGTAIVSDTTDDLWFLNESVSEQFGVGKKVEAADPEQTSEEVGKLIDKKVTEVGKNDDLEDPKSISDDTDIEVTSEDEWQCTECKKFNSPSKRYCFRCWALRKDWYSDCSKLTHSLSTSDITAIPEKQESEGVDVPDCRRTVSAPVVRPKDTYVKEESSKHFDPCNSVEFLDLAHSSESQETISSMGEQSDNLFEQRKDTENMEDCQNLLKPCSLCEKRPRNGNIIHGRTGHLVTCFHCARRLKKAGASCPICKKEIQLVIKVFVA</sequence>
<protein>
    <recommendedName>
        <fullName>Protein Mdm4</fullName>
    </recommendedName>
    <alternativeName>
        <fullName>Double minute 4 protein</fullName>
    </alternativeName>
    <alternativeName>
        <fullName>Mdm2-like p53-binding protein</fullName>
    </alternativeName>
    <alternativeName>
        <fullName>Protein Mdmx</fullName>
    </alternativeName>
    <alternativeName>
        <fullName>p53-binding protein Mdm4</fullName>
    </alternativeName>
</protein>
<keyword id="KW-0479">Metal-binding</keyword>
<keyword id="KW-0539">Nucleus</keyword>
<keyword id="KW-0597">Phosphoprotein</keyword>
<keyword id="KW-1185">Reference proteome</keyword>
<keyword id="KW-0832">Ubl conjugation</keyword>
<keyword id="KW-0862">Zinc</keyword>
<keyword id="KW-0863">Zinc-finger</keyword>
<reference key="1">
    <citation type="submission" date="2006-02" db="EMBL/GenBank/DDBJ databases">
        <authorList>
            <consortium name="NIH - Mammalian Gene Collection (MGC) project"/>
        </authorList>
    </citation>
    <scope>NUCLEOTIDE SEQUENCE [LARGE SCALE MRNA]</scope>
    <source>
        <strain>Hereford</strain>
        <tissue>Uterus</tissue>
    </source>
</reference>
<name>MDM4_BOVIN</name>
<comment type="function">
    <text evidence="1">Inhibits p53/TP53- and TP73/p73-mediated cell cycle arrest and apoptosis by binding its transcriptional activation domain. Inhibits degradation of MDM2. Can reverse MDM2-targeted degradation of TP53 while maintaining suppression of TP53 transactivation and apoptotic functions (By similarity).</text>
</comment>
<comment type="subunit">
    <text evidence="1">Interacts with MDM2, TP53, TP73 and USP2. Found in a trimeric complex with USP2, MDM2 and MDM4. Interacts (phosphorylated) with YWHAG; negatively regulates MDM4 activity toward TP53 (By similarity).</text>
</comment>
<comment type="subcellular location">
    <subcellularLocation>
        <location evidence="1">Nucleus</location>
    </subcellularLocation>
</comment>
<comment type="PTM">
    <text evidence="1">Phosphorylated. Phosphorylation at Ser-368 promotes interaction with YWHAG and subsequent ubiquitination and degradation. Phosphorylation at Ser-342 also induces ubiquitination and degradation but to a lower extent (By similarity).</text>
</comment>
<comment type="PTM">
    <text evidence="1">Ubiquitinated and degraded by MDM2. Deubiquitination by USP2 on the other hand stabilizes the MDM4 protein (By similarity).</text>
</comment>
<comment type="similarity">
    <text evidence="8">Belongs to the MDM2/MDM4 family.</text>
</comment>
<dbReference type="EMBL" id="BC113350">
    <property type="protein sequence ID" value="AAI13351.1"/>
    <property type="molecule type" value="mRNA"/>
</dbReference>
<dbReference type="RefSeq" id="NP_001039634.1">
    <property type="nucleotide sequence ID" value="NM_001046169.1"/>
</dbReference>
<dbReference type="SMR" id="Q2HJ21"/>
<dbReference type="FunCoup" id="Q2HJ21">
    <property type="interactions" value="2564"/>
</dbReference>
<dbReference type="STRING" id="9913.ENSBTAP00000008209"/>
<dbReference type="PaxDb" id="9913-ENSBTAP00000008209"/>
<dbReference type="GeneID" id="514225"/>
<dbReference type="KEGG" id="bta:514225"/>
<dbReference type="CTD" id="4194"/>
<dbReference type="eggNOG" id="ENOG502QQNV">
    <property type="taxonomic scope" value="Eukaryota"/>
</dbReference>
<dbReference type="InParanoid" id="Q2HJ21"/>
<dbReference type="OrthoDB" id="24526at2759"/>
<dbReference type="Proteomes" id="UP000009136">
    <property type="component" value="Unplaced"/>
</dbReference>
<dbReference type="GO" id="GO:0005634">
    <property type="term" value="C:nucleus"/>
    <property type="evidence" value="ECO:0007669"/>
    <property type="project" value="UniProtKB-SubCell"/>
</dbReference>
<dbReference type="GO" id="GO:0004842">
    <property type="term" value="F:ubiquitin-protein transferase activity"/>
    <property type="evidence" value="ECO:0000318"/>
    <property type="project" value="GO_Central"/>
</dbReference>
<dbReference type="GO" id="GO:0008270">
    <property type="term" value="F:zinc ion binding"/>
    <property type="evidence" value="ECO:0007669"/>
    <property type="project" value="UniProtKB-KW"/>
</dbReference>
<dbReference type="GO" id="GO:0043066">
    <property type="term" value="P:negative regulation of apoptotic process"/>
    <property type="evidence" value="ECO:0007669"/>
    <property type="project" value="InterPro"/>
</dbReference>
<dbReference type="GO" id="GO:0016567">
    <property type="term" value="P:protein ubiquitination"/>
    <property type="evidence" value="ECO:0000318"/>
    <property type="project" value="GO_Central"/>
</dbReference>
<dbReference type="GO" id="GO:0065008">
    <property type="term" value="P:regulation of biological quality"/>
    <property type="evidence" value="ECO:0007669"/>
    <property type="project" value="UniProtKB-ARBA"/>
</dbReference>
<dbReference type="GO" id="GO:0051726">
    <property type="term" value="P:regulation of cell cycle"/>
    <property type="evidence" value="ECO:0007669"/>
    <property type="project" value="InterPro"/>
</dbReference>
<dbReference type="CDD" id="cd17673">
    <property type="entry name" value="MDM4"/>
    <property type="match status" value="1"/>
</dbReference>
<dbReference type="CDD" id="cd16784">
    <property type="entry name" value="mRING-HC-C2H2C4_MDM4"/>
    <property type="match status" value="1"/>
</dbReference>
<dbReference type="FunFam" id="1.10.245.10:FF:000002">
    <property type="entry name" value="E3 ubiquitin-protein ligase Mdm2"/>
    <property type="match status" value="1"/>
</dbReference>
<dbReference type="FunFam" id="2.30.30.380:FF:000010">
    <property type="entry name" value="MDM4 isoform 3"/>
    <property type="match status" value="1"/>
</dbReference>
<dbReference type="FunFam" id="3.30.40.10:FF:000176">
    <property type="entry name" value="MDM4 isoform 3"/>
    <property type="match status" value="1"/>
</dbReference>
<dbReference type="Gene3D" id="1.10.245.10">
    <property type="entry name" value="SWIB/MDM2 domain"/>
    <property type="match status" value="1"/>
</dbReference>
<dbReference type="Gene3D" id="3.30.40.10">
    <property type="entry name" value="Zinc/RING finger domain, C3HC4 (zinc finger)"/>
    <property type="match status" value="1"/>
</dbReference>
<dbReference type="Gene3D" id="2.30.30.380">
    <property type="entry name" value="Zn-finger domain of Sec23/24"/>
    <property type="match status" value="1"/>
</dbReference>
<dbReference type="InterPro" id="IPR015458">
    <property type="entry name" value="MDM4"/>
</dbReference>
<dbReference type="InterPro" id="IPR016495">
    <property type="entry name" value="p53_neg-reg_MDM_2/4"/>
</dbReference>
<dbReference type="InterPro" id="IPR036885">
    <property type="entry name" value="SWIB_MDM2_dom_sf"/>
</dbReference>
<dbReference type="InterPro" id="IPR003121">
    <property type="entry name" value="SWIB_MDM2_domain"/>
</dbReference>
<dbReference type="InterPro" id="IPR001876">
    <property type="entry name" value="Znf_RanBP2"/>
</dbReference>
<dbReference type="InterPro" id="IPR036443">
    <property type="entry name" value="Znf_RanBP2_sf"/>
</dbReference>
<dbReference type="InterPro" id="IPR001841">
    <property type="entry name" value="Znf_RING"/>
</dbReference>
<dbReference type="InterPro" id="IPR013083">
    <property type="entry name" value="Znf_RING/FYVE/PHD"/>
</dbReference>
<dbReference type="PANTHER" id="PTHR46858">
    <property type="entry name" value="OS05G0521000 PROTEIN"/>
    <property type="match status" value="1"/>
</dbReference>
<dbReference type="PANTHER" id="PTHR46858:SF12">
    <property type="entry name" value="PROTEIN MDM4"/>
    <property type="match status" value="1"/>
</dbReference>
<dbReference type="Pfam" id="PF13920">
    <property type="entry name" value="zf-C3HC4_3"/>
    <property type="match status" value="1"/>
</dbReference>
<dbReference type="Pfam" id="PF00641">
    <property type="entry name" value="Zn_ribbon_RanBP"/>
    <property type="match status" value="1"/>
</dbReference>
<dbReference type="PIRSF" id="PIRSF500699">
    <property type="entry name" value="MDM4"/>
    <property type="match status" value="1"/>
</dbReference>
<dbReference type="PIRSF" id="PIRSF006748">
    <property type="entry name" value="p53_MDM_2/4"/>
    <property type="match status" value="1"/>
</dbReference>
<dbReference type="SUPFAM" id="SSF90209">
    <property type="entry name" value="Ran binding protein zinc finger-like"/>
    <property type="match status" value="1"/>
</dbReference>
<dbReference type="SUPFAM" id="SSF47592">
    <property type="entry name" value="SWIB/MDM2 domain"/>
    <property type="match status" value="1"/>
</dbReference>
<dbReference type="PROSITE" id="PS51925">
    <property type="entry name" value="SWIB_MDM2"/>
    <property type="match status" value="1"/>
</dbReference>
<dbReference type="PROSITE" id="PS01358">
    <property type="entry name" value="ZF_RANBP2_1"/>
    <property type="match status" value="1"/>
</dbReference>
<dbReference type="PROSITE" id="PS50199">
    <property type="entry name" value="ZF_RANBP2_2"/>
    <property type="match status" value="1"/>
</dbReference>
<dbReference type="PROSITE" id="PS50089">
    <property type="entry name" value="ZF_RING_2"/>
    <property type="match status" value="1"/>
</dbReference>
<proteinExistence type="evidence at transcript level"/>
<accession>Q2HJ21</accession>
<gene>
    <name type="primary">MDM4</name>
    <name type="synonym">MDMX</name>
</gene>
<feature type="chain" id="PRO_0000331515" description="Protein Mdm4">
    <location>
        <begin position="1"/>
        <end position="491"/>
    </location>
</feature>
<feature type="domain" description="SWIB/MDM2" evidence="6">
    <location>
        <begin position="25"/>
        <end position="108"/>
    </location>
</feature>
<feature type="zinc finger region" description="RanBP2-type" evidence="5">
    <location>
        <begin position="300"/>
        <end position="329"/>
    </location>
</feature>
<feature type="zinc finger region" description="RING-type; degenerate" evidence="4">
    <location>
        <begin position="438"/>
        <end position="479"/>
    </location>
</feature>
<feature type="region of interest" description="Disordered" evidence="7">
    <location>
        <begin position="1"/>
        <end position="25"/>
    </location>
</feature>
<feature type="region of interest" description="Disordered" evidence="7">
    <location>
        <begin position="131"/>
        <end position="163"/>
    </location>
</feature>
<feature type="region of interest" description="Necessary for interaction with USP2" evidence="1">
    <location>
        <begin position="394"/>
        <end position="491"/>
    </location>
</feature>
<feature type="short sequence motif" description="Nuclear localization signal" evidence="3">
    <location>
        <begin position="443"/>
        <end position="446"/>
    </location>
</feature>
<feature type="compositionally biased region" description="Basic and acidic residues" evidence="7">
    <location>
        <begin position="131"/>
        <end position="152"/>
    </location>
</feature>
<feature type="modified residue" description="Phosphoserine; by CHEK2" evidence="2">
    <location>
        <position position="342"/>
    </location>
</feature>
<feature type="modified residue" description="Phosphoserine; by CHEK1 and CHEK2" evidence="2">
    <location>
        <position position="368"/>
    </location>
</feature>